<protein>
    <recommendedName>
        <fullName evidence="5">Fe(2+) transporter FeoB</fullName>
    </recommendedName>
    <alternativeName>
        <fullName>Ferrous iron transport protein B</fullName>
    </alternativeName>
</protein>
<organism>
    <name type="scientific">Leptospira interrogans serogroup Icterohaemorrhagiae serovar Lai (strain 56601)</name>
    <dbReference type="NCBI Taxonomy" id="189518"/>
    <lineage>
        <taxon>Bacteria</taxon>
        <taxon>Pseudomonadati</taxon>
        <taxon>Spirochaetota</taxon>
        <taxon>Spirochaetia</taxon>
        <taxon>Leptospirales</taxon>
        <taxon>Leptospiraceae</taxon>
        <taxon>Leptospira</taxon>
    </lineage>
</organism>
<dbReference type="EMBL" id="AE010300">
    <property type="protein sequence ID" value="AAN49778.1"/>
    <property type="molecule type" value="Genomic_DNA"/>
</dbReference>
<dbReference type="RefSeq" id="NP_712760.1">
    <property type="nucleotide sequence ID" value="NC_004342.2"/>
</dbReference>
<dbReference type="RefSeq" id="WP_000510008.1">
    <property type="nucleotide sequence ID" value="NC_004342.2"/>
</dbReference>
<dbReference type="SMR" id="Q8F332"/>
<dbReference type="FunCoup" id="Q8F332">
    <property type="interactions" value="142"/>
</dbReference>
<dbReference type="STRING" id="189518.LA_2579"/>
<dbReference type="PaxDb" id="189518-LA_2579"/>
<dbReference type="EnsemblBacteria" id="AAN49778">
    <property type="protein sequence ID" value="AAN49778"/>
    <property type="gene ID" value="LA_2579"/>
</dbReference>
<dbReference type="KEGG" id="lil:LA_2579"/>
<dbReference type="PATRIC" id="fig|189518.3.peg.2563"/>
<dbReference type="HOGENOM" id="CLU_013350_3_2_12"/>
<dbReference type="InParanoid" id="Q8F332"/>
<dbReference type="OrthoDB" id="9809127at2"/>
<dbReference type="Proteomes" id="UP000001408">
    <property type="component" value="Chromosome I"/>
</dbReference>
<dbReference type="GO" id="GO:0005886">
    <property type="term" value="C:plasma membrane"/>
    <property type="evidence" value="ECO:0000318"/>
    <property type="project" value="GO_Central"/>
</dbReference>
<dbReference type="GO" id="GO:0015093">
    <property type="term" value="F:ferrous iron transmembrane transporter activity"/>
    <property type="evidence" value="ECO:0000318"/>
    <property type="project" value="GO_Central"/>
</dbReference>
<dbReference type="GO" id="GO:0005525">
    <property type="term" value="F:GTP binding"/>
    <property type="evidence" value="ECO:0007669"/>
    <property type="project" value="UniProtKB-KW"/>
</dbReference>
<dbReference type="CDD" id="cd01879">
    <property type="entry name" value="FeoB"/>
    <property type="match status" value="1"/>
</dbReference>
<dbReference type="Gene3D" id="3.40.50.300">
    <property type="entry name" value="P-loop containing nucleotide triphosphate hydrolases"/>
    <property type="match status" value="1"/>
</dbReference>
<dbReference type="InterPro" id="IPR003373">
    <property type="entry name" value="Fe2_transport_prot-B"/>
</dbReference>
<dbReference type="InterPro" id="IPR011640">
    <property type="entry name" value="Fe2_transport_prot_B_C"/>
</dbReference>
<dbReference type="InterPro" id="IPR050860">
    <property type="entry name" value="FeoB_GTPase"/>
</dbReference>
<dbReference type="InterPro" id="IPR030389">
    <property type="entry name" value="G_FEOB_dom"/>
</dbReference>
<dbReference type="InterPro" id="IPR011642">
    <property type="entry name" value="Gate_dom"/>
</dbReference>
<dbReference type="InterPro" id="IPR006073">
    <property type="entry name" value="GTP-bd"/>
</dbReference>
<dbReference type="InterPro" id="IPR027417">
    <property type="entry name" value="P-loop_NTPase"/>
</dbReference>
<dbReference type="NCBIfam" id="TIGR00437">
    <property type="entry name" value="feoB"/>
    <property type="match status" value="1"/>
</dbReference>
<dbReference type="PANTHER" id="PTHR43185:SF1">
    <property type="entry name" value="FE(2+) TRANSPORTER FEOB"/>
    <property type="match status" value="1"/>
</dbReference>
<dbReference type="PANTHER" id="PTHR43185">
    <property type="entry name" value="FERROUS IRON TRANSPORT PROTEIN B"/>
    <property type="match status" value="1"/>
</dbReference>
<dbReference type="Pfam" id="PF07664">
    <property type="entry name" value="FeoB_C"/>
    <property type="match status" value="1"/>
</dbReference>
<dbReference type="Pfam" id="PF02421">
    <property type="entry name" value="FeoB_N"/>
    <property type="match status" value="1"/>
</dbReference>
<dbReference type="Pfam" id="PF07670">
    <property type="entry name" value="Gate"/>
    <property type="match status" value="2"/>
</dbReference>
<dbReference type="PRINTS" id="PR00326">
    <property type="entry name" value="GTP1OBG"/>
</dbReference>
<dbReference type="SUPFAM" id="SSF52540">
    <property type="entry name" value="P-loop containing nucleoside triphosphate hydrolases"/>
    <property type="match status" value="1"/>
</dbReference>
<dbReference type="PROSITE" id="PS51711">
    <property type="entry name" value="G_FEOB"/>
    <property type="match status" value="1"/>
</dbReference>
<evidence type="ECO:0000250" key="1">
    <source>
        <dbReference type="UniProtKB" id="P33650"/>
    </source>
</evidence>
<evidence type="ECO:0000250" key="2">
    <source>
        <dbReference type="UniProtKB" id="Q8GNS3"/>
    </source>
</evidence>
<evidence type="ECO:0000255" key="3"/>
<evidence type="ECO:0000255" key="4">
    <source>
        <dbReference type="PROSITE-ProRule" id="PRU01048"/>
    </source>
</evidence>
<evidence type="ECO:0000305" key="5"/>
<accession>Q8F332</accession>
<feature type="chain" id="PRO_0000210838" description="Fe(2+) transporter FeoB">
    <location>
        <begin position="1"/>
        <end position="701"/>
    </location>
</feature>
<feature type="transmembrane region" description="Helical" evidence="3">
    <location>
        <begin position="292"/>
        <end position="312"/>
    </location>
</feature>
<feature type="transmembrane region" description="Helical" evidence="3">
    <location>
        <begin position="352"/>
        <end position="372"/>
    </location>
</feature>
<feature type="transmembrane region" description="Helical" evidence="3">
    <location>
        <begin position="394"/>
        <end position="414"/>
    </location>
</feature>
<feature type="transmembrane region" description="Helical" evidence="3">
    <location>
        <begin position="429"/>
        <end position="451"/>
    </location>
</feature>
<feature type="transmembrane region" description="Helical" evidence="3">
    <location>
        <begin position="466"/>
        <end position="486"/>
    </location>
</feature>
<feature type="transmembrane region" description="Helical" evidence="3">
    <location>
        <begin position="523"/>
        <end position="543"/>
    </location>
</feature>
<feature type="transmembrane region" description="Helical" evidence="3">
    <location>
        <begin position="645"/>
        <end position="665"/>
    </location>
</feature>
<feature type="transmembrane region" description="Helical" evidence="3">
    <location>
        <begin position="672"/>
        <end position="692"/>
    </location>
</feature>
<feature type="domain" description="FeoB-type G" evidence="4">
    <location>
        <begin position="9"/>
        <end position="172"/>
    </location>
</feature>
<feature type="binding site" evidence="4">
    <location>
        <begin position="16"/>
        <end position="23"/>
    </location>
    <ligand>
        <name>GTP</name>
        <dbReference type="ChEBI" id="CHEBI:37565"/>
    </ligand>
</feature>
<feature type="binding site" evidence="4">
    <location>
        <begin position="41"/>
        <end position="46"/>
    </location>
    <ligand>
        <name>GTP</name>
        <dbReference type="ChEBI" id="CHEBI:37565"/>
    </ligand>
</feature>
<feature type="binding site" evidence="4">
    <location>
        <begin position="62"/>
        <end position="65"/>
    </location>
    <ligand>
        <name>GTP</name>
        <dbReference type="ChEBI" id="CHEBI:37565"/>
    </ligand>
</feature>
<sequence length="701" mass="78128">MGHSDSSKTFRILMAGNPNCGKSTLFNQLTGLRQKTGNYHGVTVEKAEGIFHHLDHSVKILDLPGAFSLGGSSEDKQITSRVLIGHEAGDRILFVMDASLAERSLQFLLQILELNVPVLVAVTMKDVLEKKRVQLRLDLLSNEFGILFQYVNPKNGEGIKELKDRIVSPKAFCLPIRSFPWDSERENFLNDLLNSLSTEHSNSLKFVLTNSLKELSGEILQKGLPGLSLFSETPSKLIREKFERFGKRFTYLEELTQKSIYIKKILSNAIVGDPIPNERVLSKADKILLHPFWGLVSFLGIMALVFQALFTWSEMPMDWIESCVRNVGTFVGDFLEEGPLRSLIQEGIIGGVGAVLVFIPQISLLFLFIGILEETGYIARASFVMDRFMGKFGLSGKSFIPLLSSAACAVPAIMGTRTIENKSDRLTTILVSPLITCSARYPVYVLVIGAIFPSKNILGIFNVQALTMFGLFLLGMIASMFAALVFKKTFFKSDSSYFLIELPAYNTPSIKSLALTVFKKLKAFLSTAGQIILFISILLWFLANYPRIDSSLYPNLTDAELKKIQIRESYAGHSGKFMEPVLKPIGFDWKMGIGIITSFAAREIMVSTLSIIYGVGGEESTDDLKEALLKDTDENGKPVWGLSNSVSLLLFFAFACQCMSTLAVVKKETNSIFWPLFLFTYMTILAYSTSFIVFQVWQLFS</sequence>
<keyword id="KW-0997">Cell inner membrane</keyword>
<keyword id="KW-1003">Cell membrane</keyword>
<keyword id="KW-0342">GTP-binding</keyword>
<keyword id="KW-0406">Ion transport</keyword>
<keyword id="KW-0408">Iron</keyword>
<keyword id="KW-0410">Iron transport</keyword>
<keyword id="KW-0472">Membrane</keyword>
<keyword id="KW-0547">Nucleotide-binding</keyword>
<keyword id="KW-1185">Reference proteome</keyword>
<keyword id="KW-0812">Transmembrane</keyword>
<keyword id="KW-1133">Transmembrane helix</keyword>
<keyword id="KW-0813">Transport</keyword>
<comment type="function">
    <text evidence="2">Probable transporter of a GTP-driven Fe(2+) uptake system.</text>
</comment>
<comment type="subcellular location">
    <subcellularLocation>
        <location evidence="1">Cell inner membrane</location>
        <topology evidence="1">Multi-pass membrane protein</topology>
    </subcellularLocation>
</comment>
<comment type="similarity">
    <text evidence="4">Belongs to the TRAFAC class TrmE-Era-EngA-EngB-Septin-like GTPase superfamily. FeoB GTPase (TC 9.A.8) family.</text>
</comment>
<reference key="1">
    <citation type="journal article" date="2003" name="Nature">
        <title>Unique physiological and pathogenic features of Leptospira interrogans revealed by whole-genome sequencing.</title>
        <authorList>
            <person name="Ren S.-X."/>
            <person name="Fu G."/>
            <person name="Jiang X.-G."/>
            <person name="Zeng R."/>
            <person name="Miao Y.-G."/>
            <person name="Xu H."/>
            <person name="Zhang Y.-X."/>
            <person name="Xiong H."/>
            <person name="Lu G."/>
            <person name="Lu L.-F."/>
            <person name="Jiang H.-Q."/>
            <person name="Jia J."/>
            <person name="Tu Y.-F."/>
            <person name="Jiang J.-X."/>
            <person name="Gu W.-Y."/>
            <person name="Zhang Y.-Q."/>
            <person name="Cai Z."/>
            <person name="Sheng H.-H."/>
            <person name="Yin H.-F."/>
            <person name="Zhang Y."/>
            <person name="Zhu G.-F."/>
            <person name="Wan M."/>
            <person name="Huang H.-L."/>
            <person name="Qian Z."/>
            <person name="Wang S.-Y."/>
            <person name="Ma W."/>
            <person name="Yao Z.-J."/>
            <person name="Shen Y."/>
            <person name="Qiang B.-Q."/>
            <person name="Xia Q.-C."/>
            <person name="Guo X.-K."/>
            <person name="Danchin A."/>
            <person name="Saint Girons I."/>
            <person name="Somerville R.L."/>
            <person name="Wen Y.-M."/>
            <person name="Shi M.-H."/>
            <person name="Chen Z."/>
            <person name="Xu J.-G."/>
            <person name="Zhao G.-P."/>
        </authorList>
    </citation>
    <scope>NUCLEOTIDE SEQUENCE [LARGE SCALE GENOMIC DNA]</scope>
    <source>
        <strain>56601</strain>
    </source>
</reference>
<gene>
    <name type="primary">feoB</name>
    <name type="ordered locus">LA_2579</name>
</gene>
<proteinExistence type="inferred from homology"/>
<name>FEOB_LEPIN</name>